<sequence>MREPEFWRRRSLLSLLLMPLAALYGAIAASRMRKPGRSIAVPVICVGNYHGGGAGKTPTTLTLVALLRELDETPVVLSRGYGGSLNGPVEVDPDRHSAAEVGDEPLMMARSVPVVVAKDRVAGATLAMSRRASVIVMDDGFQNPALAKDVSLIVIDARRGIGNGRVIPSGPLRAPLPLQCERTDALLIIGAGSAADPVAARLKSKGVPTLRGHLAPDPACVEALRGRAVLAFAGIGDPERFFATLRASGIEVAAERPFPDHHPYSGDDVAALLDRARRDGLTLVTTEKDLARLGDQPQLAEAGLTALPVTLALEDEAGFRRFVIAQLGAARDRRFRGNRR</sequence>
<name>LPXK_RHOP5</name>
<reference key="1">
    <citation type="submission" date="2006-09" db="EMBL/GenBank/DDBJ databases">
        <title>Complete sequence of Rhodopseudomonas palustris BisA53.</title>
        <authorList>
            <consortium name="US DOE Joint Genome Institute"/>
            <person name="Copeland A."/>
            <person name="Lucas S."/>
            <person name="Lapidus A."/>
            <person name="Barry K."/>
            <person name="Detter J.C."/>
            <person name="Glavina del Rio T."/>
            <person name="Hammon N."/>
            <person name="Israni S."/>
            <person name="Dalin E."/>
            <person name="Tice H."/>
            <person name="Pitluck S."/>
            <person name="Chain P."/>
            <person name="Malfatti S."/>
            <person name="Shin M."/>
            <person name="Vergez L."/>
            <person name="Schmutz J."/>
            <person name="Larimer F."/>
            <person name="Land M."/>
            <person name="Hauser L."/>
            <person name="Pelletier D.A."/>
            <person name="Kyrpides N."/>
            <person name="Kim E."/>
            <person name="Harwood C.S."/>
            <person name="Oda Y."/>
            <person name="Richardson P."/>
        </authorList>
    </citation>
    <scope>NUCLEOTIDE SEQUENCE [LARGE SCALE GENOMIC DNA]</scope>
    <source>
        <strain>BisA53</strain>
    </source>
</reference>
<organism>
    <name type="scientific">Rhodopseudomonas palustris (strain BisA53)</name>
    <dbReference type="NCBI Taxonomy" id="316055"/>
    <lineage>
        <taxon>Bacteria</taxon>
        <taxon>Pseudomonadati</taxon>
        <taxon>Pseudomonadota</taxon>
        <taxon>Alphaproteobacteria</taxon>
        <taxon>Hyphomicrobiales</taxon>
        <taxon>Nitrobacteraceae</taxon>
        <taxon>Rhodopseudomonas</taxon>
    </lineage>
</organism>
<keyword id="KW-0067">ATP-binding</keyword>
<keyword id="KW-0418">Kinase</keyword>
<keyword id="KW-0441">Lipid A biosynthesis</keyword>
<keyword id="KW-0444">Lipid biosynthesis</keyword>
<keyword id="KW-0443">Lipid metabolism</keyword>
<keyword id="KW-0547">Nucleotide-binding</keyword>
<keyword id="KW-0808">Transferase</keyword>
<comment type="function">
    <text evidence="1">Transfers the gamma-phosphate of ATP to the 4'-position of a tetraacyldisaccharide 1-phosphate intermediate (termed DS-1-P) to form tetraacyldisaccharide 1,4'-bis-phosphate (lipid IVA).</text>
</comment>
<comment type="catalytic activity">
    <reaction evidence="1">
        <text>a lipid A disaccharide + ATP = a lipid IVA + ADP + H(+)</text>
        <dbReference type="Rhea" id="RHEA:67840"/>
        <dbReference type="ChEBI" id="CHEBI:15378"/>
        <dbReference type="ChEBI" id="CHEBI:30616"/>
        <dbReference type="ChEBI" id="CHEBI:176343"/>
        <dbReference type="ChEBI" id="CHEBI:176425"/>
        <dbReference type="ChEBI" id="CHEBI:456216"/>
        <dbReference type="EC" id="2.7.1.130"/>
    </reaction>
</comment>
<comment type="pathway">
    <text evidence="1">Glycolipid biosynthesis; lipid IV(A) biosynthesis; lipid IV(A) from (3R)-3-hydroxytetradecanoyl-[acyl-carrier-protein] and UDP-N-acetyl-alpha-D-glucosamine: step 6/6.</text>
</comment>
<comment type="similarity">
    <text evidence="1">Belongs to the LpxK family.</text>
</comment>
<accession>Q07T97</accession>
<evidence type="ECO:0000255" key="1">
    <source>
        <dbReference type="HAMAP-Rule" id="MF_00409"/>
    </source>
</evidence>
<protein>
    <recommendedName>
        <fullName evidence="1">Tetraacyldisaccharide 4'-kinase</fullName>
        <ecNumber evidence="1">2.7.1.130</ecNumber>
    </recommendedName>
    <alternativeName>
        <fullName evidence="1">Lipid A 4'-kinase</fullName>
    </alternativeName>
</protein>
<dbReference type="EC" id="2.7.1.130" evidence="1"/>
<dbReference type="EMBL" id="CP000463">
    <property type="protein sequence ID" value="ABJ04837.1"/>
    <property type="molecule type" value="Genomic_DNA"/>
</dbReference>
<dbReference type="SMR" id="Q07T97"/>
<dbReference type="STRING" id="316055.RPE_0881"/>
<dbReference type="KEGG" id="rpe:RPE_0881"/>
<dbReference type="eggNOG" id="COG1663">
    <property type="taxonomic scope" value="Bacteria"/>
</dbReference>
<dbReference type="HOGENOM" id="CLU_038816_0_0_5"/>
<dbReference type="OrthoDB" id="9766423at2"/>
<dbReference type="UniPathway" id="UPA00359">
    <property type="reaction ID" value="UER00482"/>
</dbReference>
<dbReference type="GO" id="GO:0005886">
    <property type="term" value="C:plasma membrane"/>
    <property type="evidence" value="ECO:0007669"/>
    <property type="project" value="TreeGrafter"/>
</dbReference>
<dbReference type="GO" id="GO:0005524">
    <property type="term" value="F:ATP binding"/>
    <property type="evidence" value="ECO:0007669"/>
    <property type="project" value="UniProtKB-UniRule"/>
</dbReference>
<dbReference type="GO" id="GO:0009029">
    <property type="term" value="F:tetraacyldisaccharide 4'-kinase activity"/>
    <property type="evidence" value="ECO:0007669"/>
    <property type="project" value="UniProtKB-UniRule"/>
</dbReference>
<dbReference type="GO" id="GO:0009245">
    <property type="term" value="P:lipid A biosynthetic process"/>
    <property type="evidence" value="ECO:0007669"/>
    <property type="project" value="UniProtKB-UniRule"/>
</dbReference>
<dbReference type="GO" id="GO:0009244">
    <property type="term" value="P:lipopolysaccharide core region biosynthetic process"/>
    <property type="evidence" value="ECO:0007669"/>
    <property type="project" value="TreeGrafter"/>
</dbReference>
<dbReference type="HAMAP" id="MF_00409">
    <property type="entry name" value="LpxK"/>
    <property type="match status" value="1"/>
</dbReference>
<dbReference type="InterPro" id="IPR003758">
    <property type="entry name" value="LpxK"/>
</dbReference>
<dbReference type="InterPro" id="IPR027417">
    <property type="entry name" value="P-loop_NTPase"/>
</dbReference>
<dbReference type="NCBIfam" id="TIGR00682">
    <property type="entry name" value="lpxK"/>
    <property type="match status" value="1"/>
</dbReference>
<dbReference type="PANTHER" id="PTHR42724">
    <property type="entry name" value="TETRAACYLDISACCHARIDE 4'-KINASE"/>
    <property type="match status" value="1"/>
</dbReference>
<dbReference type="PANTHER" id="PTHR42724:SF1">
    <property type="entry name" value="TETRAACYLDISACCHARIDE 4'-KINASE, MITOCHONDRIAL-RELATED"/>
    <property type="match status" value="1"/>
</dbReference>
<dbReference type="Pfam" id="PF02606">
    <property type="entry name" value="LpxK"/>
    <property type="match status" value="1"/>
</dbReference>
<dbReference type="SUPFAM" id="SSF52540">
    <property type="entry name" value="P-loop containing nucleoside triphosphate hydrolases"/>
    <property type="match status" value="1"/>
</dbReference>
<gene>
    <name evidence="1" type="primary">lpxK</name>
    <name type="ordered locus">RPE_0881</name>
</gene>
<feature type="chain" id="PRO_0000291234" description="Tetraacyldisaccharide 4'-kinase">
    <location>
        <begin position="1"/>
        <end position="340"/>
    </location>
</feature>
<feature type="binding site" evidence="1">
    <location>
        <begin position="50"/>
        <end position="57"/>
    </location>
    <ligand>
        <name>ATP</name>
        <dbReference type="ChEBI" id="CHEBI:30616"/>
    </ligand>
</feature>
<proteinExistence type="inferred from homology"/>